<gene>
    <name evidence="1" type="primary">atpF</name>
    <name type="ordered locus">Daci_0416</name>
</gene>
<feature type="chain" id="PRO_0000368455" description="ATP synthase subunit b">
    <location>
        <begin position="1"/>
        <end position="156"/>
    </location>
</feature>
<feature type="transmembrane region" description="Helical" evidence="1">
    <location>
        <begin position="7"/>
        <end position="27"/>
    </location>
</feature>
<protein>
    <recommendedName>
        <fullName evidence="1">ATP synthase subunit b</fullName>
    </recommendedName>
    <alternativeName>
        <fullName evidence="1">ATP synthase F(0) sector subunit b</fullName>
    </alternativeName>
    <alternativeName>
        <fullName evidence="1">ATPase subunit I</fullName>
    </alternativeName>
    <alternativeName>
        <fullName evidence="1">F-type ATPase subunit b</fullName>
        <shortName evidence="1">F-ATPase subunit b</shortName>
    </alternativeName>
</protein>
<sequence>MSINATLFVQAIVFLILVLFTMKFVWPPIAKALDERALKIADGLAAADKAKTDLAAANKRVEQELAQTRNETASRLADAERRAQAIIEEAKARASEEGNKIVAAARAEAEQQTVQAREALREQVAALAVKGAEQILRKEVDAGVHADLLNRLKTEL</sequence>
<name>ATPF_DELAS</name>
<reference key="1">
    <citation type="submission" date="2007-11" db="EMBL/GenBank/DDBJ databases">
        <title>Complete sequence of Delftia acidovorans DSM 14801 / SPH-1.</title>
        <authorList>
            <person name="Copeland A."/>
            <person name="Lucas S."/>
            <person name="Lapidus A."/>
            <person name="Barry K."/>
            <person name="Glavina del Rio T."/>
            <person name="Dalin E."/>
            <person name="Tice H."/>
            <person name="Pitluck S."/>
            <person name="Lowry S."/>
            <person name="Clum A."/>
            <person name="Schmutz J."/>
            <person name="Larimer F."/>
            <person name="Land M."/>
            <person name="Hauser L."/>
            <person name="Kyrpides N."/>
            <person name="Kim E."/>
            <person name="Schleheck D."/>
            <person name="Richardson P."/>
        </authorList>
    </citation>
    <scope>NUCLEOTIDE SEQUENCE [LARGE SCALE GENOMIC DNA]</scope>
    <source>
        <strain>DSM 14801 / SPH-1</strain>
    </source>
</reference>
<dbReference type="EMBL" id="CP000884">
    <property type="protein sequence ID" value="ABX33062.1"/>
    <property type="molecule type" value="Genomic_DNA"/>
</dbReference>
<dbReference type="RefSeq" id="WP_012202353.1">
    <property type="nucleotide sequence ID" value="NC_010002.1"/>
</dbReference>
<dbReference type="SMR" id="A9BPU3"/>
<dbReference type="STRING" id="398578.Daci_0416"/>
<dbReference type="GeneID" id="24116974"/>
<dbReference type="KEGG" id="dac:Daci_0416"/>
<dbReference type="eggNOG" id="COG0711">
    <property type="taxonomic scope" value="Bacteria"/>
</dbReference>
<dbReference type="HOGENOM" id="CLU_079215_4_5_4"/>
<dbReference type="Proteomes" id="UP000000784">
    <property type="component" value="Chromosome"/>
</dbReference>
<dbReference type="GO" id="GO:0005886">
    <property type="term" value="C:plasma membrane"/>
    <property type="evidence" value="ECO:0007669"/>
    <property type="project" value="UniProtKB-SubCell"/>
</dbReference>
<dbReference type="GO" id="GO:0045259">
    <property type="term" value="C:proton-transporting ATP synthase complex"/>
    <property type="evidence" value="ECO:0007669"/>
    <property type="project" value="UniProtKB-KW"/>
</dbReference>
<dbReference type="GO" id="GO:0046933">
    <property type="term" value="F:proton-transporting ATP synthase activity, rotational mechanism"/>
    <property type="evidence" value="ECO:0007669"/>
    <property type="project" value="UniProtKB-UniRule"/>
</dbReference>
<dbReference type="GO" id="GO:0046961">
    <property type="term" value="F:proton-transporting ATPase activity, rotational mechanism"/>
    <property type="evidence" value="ECO:0007669"/>
    <property type="project" value="TreeGrafter"/>
</dbReference>
<dbReference type="CDD" id="cd06503">
    <property type="entry name" value="ATP-synt_Fo_b"/>
    <property type="match status" value="1"/>
</dbReference>
<dbReference type="Gene3D" id="6.10.250.1580">
    <property type="match status" value="1"/>
</dbReference>
<dbReference type="HAMAP" id="MF_01398">
    <property type="entry name" value="ATP_synth_b_bprime"/>
    <property type="match status" value="1"/>
</dbReference>
<dbReference type="InterPro" id="IPR028987">
    <property type="entry name" value="ATP_synth_B-like_membr_sf"/>
</dbReference>
<dbReference type="InterPro" id="IPR002146">
    <property type="entry name" value="ATP_synth_b/b'su_bac/chlpt"/>
</dbReference>
<dbReference type="InterPro" id="IPR005864">
    <property type="entry name" value="ATP_synth_F0_bsu_bac"/>
</dbReference>
<dbReference type="InterPro" id="IPR050059">
    <property type="entry name" value="ATP_synthase_B_chain"/>
</dbReference>
<dbReference type="NCBIfam" id="TIGR01144">
    <property type="entry name" value="ATP_synt_b"/>
    <property type="match status" value="1"/>
</dbReference>
<dbReference type="NCBIfam" id="NF004411">
    <property type="entry name" value="PRK05759.1-2"/>
    <property type="match status" value="1"/>
</dbReference>
<dbReference type="PANTHER" id="PTHR33445:SF1">
    <property type="entry name" value="ATP SYNTHASE SUBUNIT B"/>
    <property type="match status" value="1"/>
</dbReference>
<dbReference type="PANTHER" id="PTHR33445">
    <property type="entry name" value="ATP SYNTHASE SUBUNIT B', CHLOROPLASTIC"/>
    <property type="match status" value="1"/>
</dbReference>
<dbReference type="Pfam" id="PF00430">
    <property type="entry name" value="ATP-synt_B"/>
    <property type="match status" value="1"/>
</dbReference>
<dbReference type="SUPFAM" id="SSF81573">
    <property type="entry name" value="F1F0 ATP synthase subunit B, membrane domain"/>
    <property type="match status" value="1"/>
</dbReference>
<organism>
    <name type="scientific">Delftia acidovorans (strain DSM 14801 / SPH-1)</name>
    <dbReference type="NCBI Taxonomy" id="398578"/>
    <lineage>
        <taxon>Bacteria</taxon>
        <taxon>Pseudomonadati</taxon>
        <taxon>Pseudomonadota</taxon>
        <taxon>Betaproteobacteria</taxon>
        <taxon>Burkholderiales</taxon>
        <taxon>Comamonadaceae</taxon>
        <taxon>Delftia</taxon>
    </lineage>
</organism>
<comment type="function">
    <text evidence="1">F(1)F(0) ATP synthase produces ATP from ADP in the presence of a proton or sodium gradient. F-type ATPases consist of two structural domains, F(1) containing the extramembraneous catalytic core and F(0) containing the membrane proton channel, linked together by a central stalk and a peripheral stalk. During catalysis, ATP synthesis in the catalytic domain of F(1) is coupled via a rotary mechanism of the central stalk subunits to proton translocation.</text>
</comment>
<comment type="function">
    <text evidence="1">Component of the F(0) channel, it forms part of the peripheral stalk, linking F(1) to F(0).</text>
</comment>
<comment type="subunit">
    <text evidence="1">F-type ATPases have 2 components, F(1) - the catalytic core - and F(0) - the membrane proton channel. F(1) has five subunits: alpha(3), beta(3), gamma(1), delta(1), epsilon(1). F(0) has three main subunits: a(1), b(2) and c(10-14). The alpha and beta chains form an alternating ring which encloses part of the gamma chain. F(1) is attached to F(0) by a central stalk formed by the gamma and epsilon chains, while a peripheral stalk is formed by the delta and b chains.</text>
</comment>
<comment type="subcellular location">
    <subcellularLocation>
        <location evidence="1">Cell inner membrane</location>
        <topology evidence="1">Single-pass membrane protein</topology>
    </subcellularLocation>
</comment>
<comment type="similarity">
    <text evidence="1">Belongs to the ATPase B chain family.</text>
</comment>
<proteinExistence type="inferred from homology"/>
<accession>A9BPU3</accession>
<keyword id="KW-0066">ATP synthesis</keyword>
<keyword id="KW-0997">Cell inner membrane</keyword>
<keyword id="KW-1003">Cell membrane</keyword>
<keyword id="KW-0138">CF(0)</keyword>
<keyword id="KW-0375">Hydrogen ion transport</keyword>
<keyword id="KW-0406">Ion transport</keyword>
<keyword id="KW-0472">Membrane</keyword>
<keyword id="KW-1185">Reference proteome</keyword>
<keyword id="KW-0812">Transmembrane</keyword>
<keyword id="KW-1133">Transmembrane helix</keyword>
<keyword id="KW-0813">Transport</keyword>
<evidence type="ECO:0000255" key="1">
    <source>
        <dbReference type="HAMAP-Rule" id="MF_01398"/>
    </source>
</evidence>